<gene>
    <name type="primary">Asb17</name>
</gene>
<organism>
    <name type="scientific">Mus musculus</name>
    <name type="common">Mouse</name>
    <dbReference type="NCBI Taxonomy" id="10090"/>
    <lineage>
        <taxon>Eukaryota</taxon>
        <taxon>Metazoa</taxon>
        <taxon>Chordata</taxon>
        <taxon>Craniata</taxon>
        <taxon>Vertebrata</taxon>
        <taxon>Euteleostomi</taxon>
        <taxon>Mammalia</taxon>
        <taxon>Eutheria</taxon>
        <taxon>Euarchontoglires</taxon>
        <taxon>Glires</taxon>
        <taxon>Rodentia</taxon>
        <taxon>Myomorpha</taxon>
        <taxon>Muroidea</taxon>
        <taxon>Muridae</taxon>
        <taxon>Murinae</taxon>
        <taxon>Mus</taxon>
        <taxon>Mus</taxon>
    </lineage>
</organism>
<dbReference type="EMBL" id="AF425641">
    <property type="protein sequence ID" value="AAL60518.1"/>
    <property type="molecule type" value="mRNA"/>
</dbReference>
<dbReference type="EMBL" id="BC049572">
    <property type="protein sequence ID" value="AAH49572.1"/>
    <property type="molecule type" value="mRNA"/>
</dbReference>
<dbReference type="EMBL" id="AK016273">
    <property type="status" value="NOT_ANNOTATED_CDS"/>
    <property type="molecule type" value="mRNA"/>
</dbReference>
<dbReference type="CCDS" id="CCDS17922.1"/>
<dbReference type="RefSeq" id="NP_080034.2">
    <property type="nucleotide sequence ID" value="NM_025758.4"/>
</dbReference>
<dbReference type="FunCoup" id="Q8VHP9">
    <property type="interactions" value="4"/>
</dbReference>
<dbReference type="STRING" id="10090.ENSMUSP00000041293"/>
<dbReference type="PhosphoSitePlus" id="Q8VHP9"/>
<dbReference type="PaxDb" id="10090-ENSMUSP00000041293"/>
<dbReference type="ProteomicsDB" id="277247"/>
<dbReference type="Antibodypedia" id="46911">
    <property type="antibodies" value="147 antibodies from 23 providers"/>
</dbReference>
<dbReference type="Ensembl" id="ENSMUST00000044089.4">
    <property type="protein sequence ID" value="ENSMUSP00000041293.4"/>
    <property type="gene ID" value="ENSMUSG00000038997.5"/>
</dbReference>
<dbReference type="GeneID" id="66772"/>
<dbReference type="KEGG" id="mmu:66772"/>
<dbReference type="UCSC" id="uc008rty.1">
    <property type="organism name" value="mouse"/>
</dbReference>
<dbReference type="AGR" id="MGI:1914022"/>
<dbReference type="CTD" id="127247"/>
<dbReference type="MGI" id="MGI:1914022">
    <property type="gene designation" value="Asb17"/>
</dbReference>
<dbReference type="VEuPathDB" id="HostDB:ENSMUSG00000038997"/>
<dbReference type="eggNOG" id="ENOG502QVW2">
    <property type="taxonomic scope" value="Eukaryota"/>
</dbReference>
<dbReference type="GeneTree" id="ENSGT00390000018077"/>
<dbReference type="HOGENOM" id="CLU_082443_0_0_1"/>
<dbReference type="InParanoid" id="Q8VHP9"/>
<dbReference type="OMA" id="KLCHKTS"/>
<dbReference type="OrthoDB" id="6419934at2759"/>
<dbReference type="PhylomeDB" id="Q8VHP9"/>
<dbReference type="TreeFam" id="TF337448"/>
<dbReference type="Reactome" id="R-MMU-8951664">
    <property type="pathway name" value="Neddylation"/>
</dbReference>
<dbReference type="Reactome" id="R-MMU-983168">
    <property type="pathway name" value="Antigen processing: Ubiquitination &amp; Proteasome degradation"/>
</dbReference>
<dbReference type="UniPathway" id="UPA00143"/>
<dbReference type="BioGRID-ORCS" id="66772">
    <property type="hits" value="1 hit in 77 CRISPR screens"/>
</dbReference>
<dbReference type="PRO" id="PR:Q8VHP9"/>
<dbReference type="Proteomes" id="UP000000589">
    <property type="component" value="Chromosome 3"/>
</dbReference>
<dbReference type="RNAct" id="Q8VHP9">
    <property type="molecule type" value="protein"/>
</dbReference>
<dbReference type="Bgee" id="ENSMUSG00000038997">
    <property type="expression patterns" value="Expressed in seminiferous tubule of testis and 27 other cell types or tissues"/>
</dbReference>
<dbReference type="ExpressionAtlas" id="Q8VHP9">
    <property type="expression patterns" value="baseline and differential"/>
</dbReference>
<dbReference type="GO" id="GO:0061831">
    <property type="term" value="C:apical ectoplasmic specialization"/>
    <property type="evidence" value="ECO:0000314"/>
    <property type="project" value="MGI"/>
</dbReference>
<dbReference type="GO" id="GO:0031461">
    <property type="term" value="C:cullin-RING ubiquitin ligase complex"/>
    <property type="evidence" value="ECO:0000304"/>
    <property type="project" value="MGI"/>
</dbReference>
<dbReference type="GO" id="GO:0150147">
    <property type="term" value="P:cell-cell junction disassembly"/>
    <property type="evidence" value="ECO:0000315"/>
    <property type="project" value="MGI"/>
</dbReference>
<dbReference type="GO" id="GO:0035556">
    <property type="term" value="P:intracellular signal transduction"/>
    <property type="evidence" value="ECO:0007669"/>
    <property type="project" value="InterPro"/>
</dbReference>
<dbReference type="GO" id="GO:0000209">
    <property type="term" value="P:protein polyubiquitination"/>
    <property type="evidence" value="ECO:0000315"/>
    <property type="project" value="MGI"/>
</dbReference>
<dbReference type="GO" id="GO:0160087">
    <property type="term" value="P:spermatid cytoplasm removal during spermiation of flagellated sperm"/>
    <property type="evidence" value="ECO:0000315"/>
    <property type="project" value="MGI"/>
</dbReference>
<dbReference type="CDD" id="cd03716">
    <property type="entry name" value="SOCS_ASB_like"/>
    <property type="match status" value="1"/>
</dbReference>
<dbReference type="Gene3D" id="1.25.40.20">
    <property type="entry name" value="Ankyrin repeat-containing domain"/>
    <property type="match status" value="1"/>
</dbReference>
<dbReference type="InterPro" id="IPR036770">
    <property type="entry name" value="Ankyrin_rpt-contain_sf"/>
</dbReference>
<dbReference type="InterPro" id="IPR039147">
    <property type="entry name" value="ASB17"/>
</dbReference>
<dbReference type="InterPro" id="IPR001496">
    <property type="entry name" value="SOCS_box"/>
</dbReference>
<dbReference type="InterPro" id="IPR036036">
    <property type="entry name" value="SOCS_box-like_dom_sf"/>
</dbReference>
<dbReference type="PANTHER" id="PTHR20966">
    <property type="entry name" value="ANKYRIN REPEAT AND SOCS BOX PROTEIN 17"/>
    <property type="match status" value="1"/>
</dbReference>
<dbReference type="PANTHER" id="PTHR20966:SF2">
    <property type="entry name" value="ANKYRIN REPEAT AND SOCS BOX PROTEIN 17"/>
    <property type="match status" value="1"/>
</dbReference>
<dbReference type="Pfam" id="PF07525">
    <property type="entry name" value="SOCS_box"/>
    <property type="match status" value="1"/>
</dbReference>
<dbReference type="SMART" id="SM00969">
    <property type="entry name" value="SOCS_box"/>
    <property type="match status" value="1"/>
</dbReference>
<dbReference type="SUPFAM" id="SSF158235">
    <property type="entry name" value="SOCS box-like"/>
    <property type="match status" value="1"/>
</dbReference>
<dbReference type="PROSITE" id="PS50225">
    <property type="entry name" value="SOCS"/>
    <property type="match status" value="1"/>
</dbReference>
<reference key="1">
    <citation type="submission" date="2001-09" db="EMBL/GenBank/DDBJ databases">
        <title>SOCS box proteins.</title>
        <authorList>
            <person name="Kile B.T."/>
            <person name="Hilton D.J."/>
            <person name="Nicola N.A."/>
        </authorList>
    </citation>
    <scope>NUCLEOTIDE SEQUENCE [MRNA]</scope>
    <source>
        <strain>C57BL/6J</strain>
    </source>
</reference>
<reference key="2">
    <citation type="journal article" date="2004" name="Genome Res.">
        <title>The status, quality, and expansion of the NIH full-length cDNA project: the Mammalian Gene Collection (MGC).</title>
        <authorList>
            <consortium name="The MGC Project Team"/>
        </authorList>
    </citation>
    <scope>NUCLEOTIDE SEQUENCE [LARGE SCALE MRNA]</scope>
    <source>
        <tissue>Testis</tissue>
    </source>
</reference>
<reference key="3">
    <citation type="journal article" date="2005" name="Science">
        <title>The transcriptional landscape of the mammalian genome.</title>
        <authorList>
            <person name="Carninci P."/>
            <person name="Kasukawa T."/>
            <person name="Katayama S."/>
            <person name="Gough J."/>
            <person name="Frith M.C."/>
            <person name="Maeda N."/>
            <person name="Oyama R."/>
            <person name="Ravasi T."/>
            <person name="Lenhard B."/>
            <person name="Wells C."/>
            <person name="Kodzius R."/>
            <person name="Shimokawa K."/>
            <person name="Bajic V.B."/>
            <person name="Brenner S.E."/>
            <person name="Batalov S."/>
            <person name="Forrest A.R."/>
            <person name="Zavolan M."/>
            <person name="Davis M.J."/>
            <person name="Wilming L.G."/>
            <person name="Aidinis V."/>
            <person name="Allen J.E."/>
            <person name="Ambesi-Impiombato A."/>
            <person name="Apweiler R."/>
            <person name="Aturaliya R.N."/>
            <person name="Bailey T.L."/>
            <person name="Bansal M."/>
            <person name="Baxter L."/>
            <person name="Beisel K.W."/>
            <person name="Bersano T."/>
            <person name="Bono H."/>
            <person name="Chalk A.M."/>
            <person name="Chiu K.P."/>
            <person name="Choudhary V."/>
            <person name="Christoffels A."/>
            <person name="Clutterbuck D.R."/>
            <person name="Crowe M.L."/>
            <person name="Dalla E."/>
            <person name="Dalrymple B.P."/>
            <person name="de Bono B."/>
            <person name="Della Gatta G."/>
            <person name="di Bernardo D."/>
            <person name="Down T."/>
            <person name="Engstrom P."/>
            <person name="Fagiolini M."/>
            <person name="Faulkner G."/>
            <person name="Fletcher C.F."/>
            <person name="Fukushima T."/>
            <person name="Furuno M."/>
            <person name="Futaki S."/>
            <person name="Gariboldi M."/>
            <person name="Georgii-Hemming P."/>
            <person name="Gingeras T.R."/>
            <person name="Gojobori T."/>
            <person name="Green R.E."/>
            <person name="Gustincich S."/>
            <person name="Harbers M."/>
            <person name="Hayashi Y."/>
            <person name="Hensch T.K."/>
            <person name="Hirokawa N."/>
            <person name="Hill D."/>
            <person name="Huminiecki L."/>
            <person name="Iacono M."/>
            <person name="Ikeo K."/>
            <person name="Iwama A."/>
            <person name="Ishikawa T."/>
            <person name="Jakt M."/>
            <person name="Kanapin A."/>
            <person name="Katoh M."/>
            <person name="Kawasawa Y."/>
            <person name="Kelso J."/>
            <person name="Kitamura H."/>
            <person name="Kitano H."/>
            <person name="Kollias G."/>
            <person name="Krishnan S.P."/>
            <person name="Kruger A."/>
            <person name="Kummerfeld S.K."/>
            <person name="Kurochkin I.V."/>
            <person name="Lareau L.F."/>
            <person name="Lazarevic D."/>
            <person name="Lipovich L."/>
            <person name="Liu J."/>
            <person name="Liuni S."/>
            <person name="McWilliam S."/>
            <person name="Madan Babu M."/>
            <person name="Madera M."/>
            <person name="Marchionni L."/>
            <person name="Matsuda H."/>
            <person name="Matsuzawa S."/>
            <person name="Miki H."/>
            <person name="Mignone F."/>
            <person name="Miyake S."/>
            <person name="Morris K."/>
            <person name="Mottagui-Tabar S."/>
            <person name="Mulder N."/>
            <person name="Nakano N."/>
            <person name="Nakauchi H."/>
            <person name="Ng P."/>
            <person name="Nilsson R."/>
            <person name="Nishiguchi S."/>
            <person name="Nishikawa S."/>
            <person name="Nori F."/>
            <person name="Ohara O."/>
            <person name="Okazaki Y."/>
            <person name="Orlando V."/>
            <person name="Pang K.C."/>
            <person name="Pavan W.J."/>
            <person name="Pavesi G."/>
            <person name="Pesole G."/>
            <person name="Petrovsky N."/>
            <person name="Piazza S."/>
            <person name="Reed J."/>
            <person name="Reid J.F."/>
            <person name="Ring B.Z."/>
            <person name="Ringwald M."/>
            <person name="Rost B."/>
            <person name="Ruan Y."/>
            <person name="Salzberg S.L."/>
            <person name="Sandelin A."/>
            <person name="Schneider C."/>
            <person name="Schoenbach C."/>
            <person name="Sekiguchi K."/>
            <person name="Semple C.A."/>
            <person name="Seno S."/>
            <person name="Sessa L."/>
            <person name="Sheng Y."/>
            <person name="Shibata Y."/>
            <person name="Shimada H."/>
            <person name="Shimada K."/>
            <person name="Silva D."/>
            <person name="Sinclair B."/>
            <person name="Sperling S."/>
            <person name="Stupka E."/>
            <person name="Sugiura K."/>
            <person name="Sultana R."/>
            <person name="Takenaka Y."/>
            <person name="Taki K."/>
            <person name="Tammoja K."/>
            <person name="Tan S.L."/>
            <person name="Tang S."/>
            <person name="Taylor M.S."/>
            <person name="Tegner J."/>
            <person name="Teichmann S.A."/>
            <person name="Ueda H.R."/>
            <person name="van Nimwegen E."/>
            <person name="Verardo R."/>
            <person name="Wei C.L."/>
            <person name="Yagi K."/>
            <person name="Yamanishi H."/>
            <person name="Zabarovsky E."/>
            <person name="Zhu S."/>
            <person name="Zimmer A."/>
            <person name="Hide W."/>
            <person name="Bult C."/>
            <person name="Grimmond S.M."/>
            <person name="Teasdale R.D."/>
            <person name="Liu E.T."/>
            <person name="Brusic V."/>
            <person name="Quackenbush J."/>
            <person name="Wahlestedt C."/>
            <person name="Mattick J.S."/>
            <person name="Hume D.A."/>
            <person name="Kai C."/>
            <person name="Sasaki D."/>
            <person name="Tomaru Y."/>
            <person name="Fukuda S."/>
            <person name="Kanamori-Katayama M."/>
            <person name="Suzuki M."/>
            <person name="Aoki J."/>
            <person name="Arakawa T."/>
            <person name="Iida J."/>
            <person name="Imamura K."/>
            <person name="Itoh M."/>
            <person name="Kato T."/>
            <person name="Kawaji H."/>
            <person name="Kawagashira N."/>
            <person name="Kawashima T."/>
            <person name="Kojima M."/>
            <person name="Kondo S."/>
            <person name="Konno H."/>
            <person name="Nakano K."/>
            <person name="Ninomiya N."/>
            <person name="Nishio T."/>
            <person name="Okada M."/>
            <person name="Plessy C."/>
            <person name="Shibata K."/>
            <person name="Shiraki T."/>
            <person name="Suzuki S."/>
            <person name="Tagami M."/>
            <person name="Waki K."/>
            <person name="Watahiki A."/>
            <person name="Okamura-Oho Y."/>
            <person name="Suzuki H."/>
            <person name="Kawai J."/>
            <person name="Hayashizaki Y."/>
        </authorList>
    </citation>
    <scope>NUCLEOTIDE SEQUENCE [LARGE SCALE MRNA] OF 1-172</scope>
    <source>
        <strain>C57BL/6J</strain>
        <tissue>Testis</tissue>
    </source>
</reference>
<reference key="4">
    <citation type="journal article" date="2004" name="Arch. Androl.">
        <title>Expression of testis specific ankyrin repeat and SOCS box-containing 17 gene.</title>
        <authorList>
            <person name="Guo J.H."/>
            <person name="Saiyin H."/>
            <person name="Wei Y.H."/>
            <person name="Chen S."/>
            <person name="Chen L."/>
            <person name="Bi G."/>
            <person name="Ma L.J."/>
            <person name="Zhou G.J."/>
            <person name="Huang C.Q."/>
            <person name="Yu L."/>
            <person name="Dai L."/>
        </authorList>
    </citation>
    <scope>TISSUE SPECIFICITY</scope>
    <scope>DEVELOPMENTAL STAGE</scope>
</reference>
<reference key="5">
    <citation type="journal article" date="2004" name="Zygote">
        <title>Murine Asb-17 expression during mouse testis development and spermatogenesis.</title>
        <authorList>
            <person name="Kim K.S."/>
            <person name="Kim M.S."/>
            <person name="Kim S.K."/>
            <person name="Baek K.H."/>
        </authorList>
    </citation>
    <scope>TISSUE SPECIFICITY</scope>
    <scope>DEVELOPMENTAL STAGE</scope>
</reference>
<proteinExistence type="evidence at transcript level"/>
<evidence type="ECO:0000250" key="1"/>
<evidence type="ECO:0000255" key="2">
    <source>
        <dbReference type="PROSITE-ProRule" id="PRU00194"/>
    </source>
</evidence>
<evidence type="ECO:0000269" key="3">
    <source>
    </source>
</evidence>
<evidence type="ECO:0000269" key="4">
    <source>
    </source>
</evidence>
<evidence type="ECO:0000305" key="5"/>
<name>ASB17_MOUSE</name>
<accession>Q8VHP9</accession>
<accession>Q9CUF9</accession>
<sequence>MNNSSKLCRKTSFPRSNIFCNLVDKIVKRPSLQFLGQWGYHCYEPRIYRTLAKILRYVDLDGFDILLTDYIAFVEKSGHRFELNFNLEFTEICVNTILYWVFARKGNPDFVELLLKKTKDYVQDRSCSLALIWRTFTPVYCPSPLSGITPLLYVAQTRQSNILKILLQYGILEREKNPINIVLTILLYPSRVRIMVDHELIDIQEDAKTCLMLCSRVLSTISVREIETQLSLGRRPIIQNWLDYIPPTRYKDPCELVHLCRITIRTQLLANNMLPNGIFSLLIPTRLQNFLNLES</sequence>
<comment type="function">
    <text evidence="1">May be a substrate-recognition component of a SCF-like ECS (Elongin-Cullin-SOCS-box protein) E3 ubiquitin-protein ligase complex which mediates the ubiquitination and subsequent proteasomal degradation of target proteins.</text>
</comment>
<comment type="pathway">
    <text>Protein modification; protein ubiquitination.</text>
</comment>
<comment type="tissue specificity">
    <text evidence="3 4">Specifically expressed in testis (PubMed:15460110). Localizes to spermatogenic cells in testis, with highest expression in round spermatids and condensing spermatids and lower expression in pachytene spermatocytes (PubMed:15204681, PubMed:15460110).</text>
</comment>
<comment type="developmental stage">
    <text evidence="3 4">Expressed in testis from 3 weeks of age onwards, reaching maximum levels by 4 to 5 weeks of age.</text>
</comment>
<comment type="domain">
    <text evidence="1">The SOCS box domain mediates the interaction with the Elongin BC complex, an adapter module in different E3 ubiquitin-protein ligase complexes.</text>
</comment>
<comment type="similarity">
    <text evidence="5">Belongs to the ankyrin SOCS box (ASB) family.</text>
</comment>
<feature type="chain" id="PRO_0000066961" description="Ankyrin repeat and SOCS box protein 17">
    <location>
        <begin position="1"/>
        <end position="295"/>
    </location>
</feature>
<feature type="repeat" description="ANK">
    <location>
        <begin position="146"/>
        <end position="176"/>
    </location>
</feature>
<feature type="domain" description="SOCS box" evidence="2">
    <location>
        <begin position="243"/>
        <end position="295"/>
    </location>
</feature>
<protein>
    <recommendedName>
        <fullName>Ankyrin repeat and SOCS box protein 17</fullName>
        <shortName>ASB-17</shortName>
    </recommendedName>
</protein>
<keyword id="KW-0040">ANK repeat</keyword>
<keyword id="KW-1185">Reference proteome</keyword>
<keyword id="KW-0833">Ubl conjugation pathway</keyword>